<name>RBFA_ALIF1</name>
<comment type="function">
    <text evidence="1">One of several proteins that assist in the late maturation steps of the functional core of the 30S ribosomal subunit. Associates with free 30S ribosomal subunits (but not with 30S subunits that are part of 70S ribosomes or polysomes). Required for efficient processing of 16S rRNA. May interact with the 5'-terminal helix region of 16S rRNA.</text>
</comment>
<comment type="subunit">
    <text evidence="1">Monomer. Binds 30S ribosomal subunits, but not 50S ribosomal subunits or 70S ribosomes.</text>
</comment>
<comment type="subcellular location">
    <subcellularLocation>
        <location evidence="1">Cytoplasm</location>
    </subcellularLocation>
</comment>
<comment type="similarity">
    <text evidence="1">Belongs to the RbfA family.</text>
</comment>
<accession>Q5E7L4</accession>
<organism>
    <name type="scientific">Aliivibrio fischeri (strain ATCC 700601 / ES114)</name>
    <name type="common">Vibrio fischeri</name>
    <dbReference type="NCBI Taxonomy" id="312309"/>
    <lineage>
        <taxon>Bacteria</taxon>
        <taxon>Pseudomonadati</taxon>
        <taxon>Pseudomonadota</taxon>
        <taxon>Gammaproteobacteria</taxon>
        <taxon>Vibrionales</taxon>
        <taxon>Vibrionaceae</taxon>
        <taxon>Aliivibrio</taxon>
    </lineage>
</organism>
<gene>
    <name evidence="1" type="primary">rbfA</name>
    <name type="ordered locus">VF_0487</name>
</gene>
<dbReference type="EMBL" id="CP000020">
    <property type="protein sequence ID" value="AAW84982.1"/>
    <property type="molecule type" value="Genomic_DNA"/>
</dbReference>
<dbReference type="RefSeq" id="WP_011261259.1">
    <property type="nucleotide sequence ID" value="NC_006840.2"/>
</dbReference>
<dbReference type="RefSeq" id="YP_203870.1">
    <property type="nucleotide sequence ID" value="NC_006840.2"/>
</dbReference>
<dbReference type="SMR" id="Q5E7L4"/>
<dbReference type="STRING" id="312309.VF_0487"/>
<dbReference type="EnsemblBacteria" id="AAW84982">
    <property type="protein sequence ID" value="AAW84982"/>
    <property type="gene ID" value="VF_0487"/>
</dbReference>
<dbReference type="GeneID" id="54163124"/>
<dbReference type="KEGG" id="vfi:VF_0487"/>
<dbReference type="PATRIC" id="fig|312309.11.peg.477"/>
<dbReference type="eggNOG" id="COG0858">
    <property type="taxonomic scope" value="Bacteria"/>
</dbReference>
<dbReference type="HOGENOM" id="CLU_089475_5_0_6"/>
<dbReference type="OrthoDB" id="307788at2"/>
<dbReference type="Proteomes" id="UP000000537">
    <property type="component" value="Chromosome I"/>
</dbReference>
<dbReference type="GO" id="GO:0005829">
    <property type="term" value="C:cytosol"/>
    <property type="evidence" value="ECO:0007669"/>
    <property type="project" value="TreeGrafter"/>
</dbReference>
<dbReference type="GO" id="GO:0043024">
    <property type="term" value="F:ribosomal small subunit binding"/>
    <property type="evidence" value="ECO:0007669"/>
    <property type="project" value="TreeGrafter"/>
</dbReference>
<dbReference type="GO" id="GO:0030490">
    <property type="term" value="P:maturation of SSU-rRNA"/>
    <property type="evidence" value="ECO:0007669"/>
    <property type="project" value="UniProtKB-UniRule"/>
</dbReference>
<dbReference type="FunFam" id="3.30.300.20:FF:000007">
    <property type="entry name" value="Ribosome-binding factor A"/>
    <property type="match status" value="1"/>
</dbReference>
<dbReference type="Gene3D" id="3.30.300.20">
    <property type="match status" value="1"/>
</dbReference>
<dbReference type="HAMAP" id="MF_00003">
    <property type="entry name" value="RbfA"/>
    <property type="match status" value="1"/>
</dbReference>
<dbReference type="InterPro" id="IPR015946">
    <property type="entry name" value="KH_dom-like_a/b"/>
</dbReference>
<dbReference type="InterPro" id="IPR000238">
    <property type="entry name" value="RbfA"/>
</dbReference>
<dbReference type="InterPro" id="IPR023799">
    <property type="entry name" value="RbfA_dom_sf"/>
</dbReference>
<dbReference type="InterPro" id="IPR020053">
    <property type="entry name" value="Ribosome-bd_factorA_CS"/>
</dbReference>
<dbReference type="NCBIfam" id="TIGR00082">
    <property type="entry name" value="rbfA"/>
    <property type="match status" value="1"/>
</dbReference>
<dbReference type="PANTHER" id="PTHR33515">
    <property type="entry name" value="RIBOSOME-BINDING FACTOR A, CHLOROPLASTIC-RELATED"/>
    <property type="match status" value="1"/>
</dbReference>
<dbReference type="PANTHER" id="PTHR33515:SF1">
    <property type="entry name" value="RIBOSOME-BINDING FACTOR A, CHLOROPLASTIC-RELATED"/>
    <property type="match status" value="1"/>
</dbReference>
<dbReference type="Pfam" id="PF02033">
    <property type="entry name" value="RBFA"/>
    <property type="match status" value="1"/>
</dbReference>
<dbReference type="SUPFAM" id="SSF89919">
    <property type="entry name" value="Ribosome-binding factor A, RbfA"/>
    <property type="match status" value="1"/>
</dbReference>
<dbReference type="PROSITE" id="PS01319">
    <property type="entry name" value="RBFA"/>
    <property type="match status" value="1"/>
</dbReference>
<reference key="1">
    <citation type="journal article" date="2005" name="Proc. Natl. Acad. Sci. U.S.A.">
        <title>Complete genome sequence of Vibrio fischeri: a symbiotic bacterium with pathogenic congeners.</title>
        <authorList>
            <person name="Ruby E.G."/>
            <person name="Urbanowski M."/>
            <person name="Campbell J."/>
            <person name="Dunn A."/>
            <person name="Faini M."/>
            <person name="Gunsalus R."/>
            <person name="Lostroh P."/>
            <person name="Lupp C."/>
            <person name="McCann J."/>
            <person name="Millikan D."/>
            <person name="Schaefer A."/>
            <person name="Stabb E."/>
            <person name="Stevens A."/>
            <person name="Visick K."/>
            <person name="Whistler C."/>
            <person name="Greenberg E.P."/>
        </authorList>
    </citation>
    <scope>NUCLEOTIDE SEQUENCE [LARGE SCALE GENOMIC DNA]</scope>
    <source>
        <strain>ATCC 700601 / ES114</strain>
    </source>
</reference>
<evidence type="ECO:0000255" key="1">
    <source>
        <dbReference type="HAMAP-Rule" id="MF_00003"/>
    </source>
</evidence>
<keyword id="KW-0963">Cytoplasm</keyword>
<keyword id="KW-1185">Reference proteome</keyword>
<keyword id="KW-0690">Ribosome biogenesis</keyword>
<proteinExistence type="inferred from homology"/>
<sequence>MSKEFSRTQRVSQQLQKELAVMLQREVRDSRIGMVTISDVEVSRDLAYAKVFVTFFCVGEQTPESSLAALKEHEPSLRMMLGKRIRLRLTPEIRFTYDNTLVEGMRMSNLVTDVVNTDKRKMAESGRTESDEGEE</sequence>
<feature type="chain" id="PRO_0000102766" description="Ribosome-binding factor A">
    <location>
        <begin position="1"/>
        <end position="135"/>
    </location>
</feature>
<protein>
    <recommendedName>
        <fullName evidence="1">Ribosome-binding factor A</fullName>
    </recommendedName>
</protein>